<feature type="chain" id="PRO_1000063451" description="Histidine biosynthesis bifunctional protein HisB">
    <location>
        <begin position="1"/>
        <end position="375"/>
    </location>
</feature>
<feature type="region of interest" description="Histidinol-phosphatase" evidence="1">
    <location>
        <begin position="1"/>
        <end position="168"/>
    </location>
</feature>
<feature type="region of interest" description="Imidazoleglycerol-phosphate dehydratase" evidence="1">
    <location>
        <begin position="169"/>
        <end position="375"/>
    </location>
</feature>
<feature type="active site" description="Nucleophile" evidence="1">
    <location>
        <position position="8"/>
    </location>
</feature>
<feature type="active site" description="Proton donor" evidence="1">
    <location>
        <position position="10"/>
    </location>
</feature>
<feature type="binding site" evidence="1">
    <location>
        <position position="8"/>
    </location>
    <ligand>
        <name>Mg(2+)</name>
        <dbReference type="ChEBI" id="CHEBI:18420"/>
    </ligand>
</feature>
<feature type="binding site" evidence="1">
    <location>
        <position position="10"/>
    </location>
    <ligand>
        <name>Mg(2+)</name>
        <dbReference type="ChEBI" id="CHEBI:18420"/>
    </ligand>
</feature>
<feature type="binding site" evidence="1">
    <location>
        <position position="128"/>
    </location>
    <ligand>
        <name>Mg(2+)</name>
        <dbReference type="ChEBI" id="CHEBI:18420"/>
    </ligand>
</feature>
<proteinExistence type="inferred from homology"/>
<organism>
    <name type="scientific">Xanthomonas campestris pv. campestris (strain 8004)</name>
    <dbReference type="NCBI Taxonomy" id="314565"/>
    <lineage>
        <taxon>Bacteria</taxon>
        <taxon>Pseudomonadati</taxon>
        <taxon>Pseudomonadota</taxon>
        <taxon>Gammaproteobacteria</taxon>
        <taxon>Lysobacterales</taxon>
        <taxon>Lysobacteraceae</taxon>
        <taxon>Xanthomonas</taxon>
    </lineage>
</organism>
<comment type="catalytic activity">
    <reaction evidence="1">
        <text>D-erythro-1-(imidazol-4-yl)glycerol 3-phosphate = 3-(imidazol-4-yl)-2-oxopropyl phosphate + H2O</text>
        <dbReference type="Rhea" id="RHEA:11040"/>
        <dbReference type="ChEBI" id="CHEBI:15377"/>
        <dbReference type="ChEBI" id="CHEBI:57766"/>
        <dbReference type="ChEBI" id="CHEBI:58278"/>
        <dbReference type="EC" id="4.2.1.19"/>
    </reaction>
</comment>
<comment type="catalytic activity">
    <reaction evidence="1">
        <text>L-histidinol phosphate + H2O = L-histidinol + phosphate</text>
        <dbReference type="Rhea" id="RHEA:14465"/>
        <dbReference type="ChEBI" id="CHEBI:15377"/>
        <dbReference type="ChEBI" id="CHEBI:43474"/>
        <dbReference type="ChEBI" id="CHEBI:57699"/>
        <dbReference type="ChEBI" id="CHEBI:57980"/>
        <dbReference type="EC" id="3.1.3.15"/>
    </reaction>
</comment>
<comment type="cofactor">
    <cofactor evidence="1">
        <name>Mg(2+)</name>
        <dbReference type="ChEBI" id="CHEBI:18420"/>
    </cofactor>
</comment>
<comment type="pathway">
    <text evidence="1">Amino-acid biosynthesis; L-histidine biosynthesis; L-histidine from 5-phospho-alpha-D-ribose 1-diphosphate: step 6/9.</text>
</comment>
<comment type="pathway">
    <text evidence="1">Amino-acid biosynthesis; L-histidine biosynthesis; L-histidine from 5-phospho-alpha-D-ribose 1-diphosphate: step 8/9.</text>
</comment>
<comment type="subcellular location">
    <subcellularLocation>
        <location evidence="1">Cytoplasm</location>
    </subcellularLocation>
</comment>
<comment type="similarity">
    <text evidence="1">In the N-terminal section; belongs to the histidinol-phosphatase family.</text>
</comment>
<comment type="similarity">
    <text evidence="1">In the C-terminal section; belongs to the imidazoleglycerol-phosphate dehydratase family.</text>
</comment>
<reference key="1">
    <citation type="journal article" date="2005" name="Genome Res.">
        <title>Comparative and functional genomic analyses of the pathogenicity of phytopathogen Xanthomonas campestris pv. campestris.</title>
        <authorList>
            <person name="Qian W."/>
            <person name="Jia Y."/>
            <person name="Ren S.-X."/>
            <person name="He Y.-Q."/>
            <person name="Feng J.-X."/>
            <person name="Lu L.-F."/>
            <person name="Sun Q."/>
            <person name="Ying G."/>
            <person name="Tang D.-J."/>
            <person name="Tang H."/>
            <person name="Wu W."/>
            <person name="Hao P."/>
            <person name="Wang L."/>
            <person name="Jiang B.-L."/>
            <person name="Zeng S."/>
            <person name="Gu W.-Y."/>
            <person name="Lu G."/>
            <person name="Rong L."/>
            <person name="Tian Y."/>
            <person name="Yao Z."/>
            <person name="Fu G."/>
            <person name="Chen B."/>
            <person name="Fang R."/>
            <person name="Qiang B."/>
            <person name="Chen Z."/>
            <person name="Zhao G.-P."/>
            <person name="Tang J.-L."/>
            <person name="He C."/>
        </authorList>
    </citation>
    <scope>NUCLEOTIDE SEQUENCE [LARGE SCALE GENOMIC DNA]</scope>
    <source>
        <strain>8004</strain>
    </source>
</reference>
<accession>Q4UU42</accession>
<evidence type="ECO:0000255" key="1">
    <source>
        <dbReference type="HAMAP-Rule" id="MF_01022"/>
    </source>
</evidence>
<name>HIS7_XANC8</name>
<protein>
    <recommendedName>
        <fullName evidence="1">Histidine biosynthesis bifunctional protein HisB</fullName>
    </recommendedName>
    <domain>
        <recommendedName>
            <fullName evidence="1">Histidinol-phosphatase</fullName>
            <ecNumber evidence="1">3.1.3.15</ecNumber>
        </recommendedName>
    </domain>
    <domain>
        <recommendedName>
            <fullName evidence="1">Imidazoleglycerol-phosphate dehydratase</fullName>
            <shortName evidence="1">IGPD</shortName>
            <ecNumber evidence="1">4.2.1.19</ecNumber>
        </recommendedName>
    </domain>
</protein>
<sequence length="375" mass="41812">MTPILFVDRDGTLITEPADFQIDAYEKLRFVDGVIPAMLKLRDAGYQFVIVSNQDGLGSESYPQASFDGPNNLMLQIFASQGIVFREVLIDCSWPADNAPTRKPGVGLMVPYLQDRTIDWSRSAMVGDRITDIQFAQNLNIRGFQLRTEQFGGDWDWAGIAHELADAPRRAVVQRNTKETRIRVELDLDRVAEPHTATGLPFFDHMLEQIGKHGGFALDIRAEGDLHIDEHHTIEDTGLALGQALREALGDKRGIGRYGFDPDDSPWRVAGDTTQHGFTLPMDETIASAALDFSGRPYFVFDGDFKRERVGDMPTELVPHFFRSVCDASGLNLHLHVRGENDHHKVEGCFKALARALRQAIRREGTALPSTKGAL</sequence>
<dbReference type="EC" id="3.1.3.15" evidence="1"/>
<dbReference type="EC" id="4.2.1.19" evidence="1"/>
<dbReference type="EMBL" id="CP000050">
    <property type="protein sequence ID" value="AAY49431.1"/>
    <property type="molecule type" value="Genomic_DNA"/>
</dbReference>
<dbReference type="RefSeq" id="WP_011036981.1">
    <property type="nucleotide sequence ID" value="NZ_CP155948.1"/>
</dbReference>
<dbReference type="SMR" id="Q4UU42"/>
<dbReference type="KEGG" id="xcb:XC_2378"/>
<dbReference type="HOGENOM" id="CLU_044308_0_0_6"/>
<dbReference type="UniPathway" id="UPA00031">
    <property type="reaction ID" value="UER00011"/>
</dbReference>
<dbReference type="UniPathway" id="UPA00031">
    <property type="reaction ID" value="UER00013"/>
</dbReference>
<dbReference type="Proteomes" id="UP000000420">
    <property type="component" value="Chromosome"/>
</dbReference>
<dbReference type="GO" id="GO:0005737">
    <property type="term" value="C:cytoplasm"/>
    <property type="evidence" value="ECO:0007669"/>
    <property type="project" value="UniProtKB-SubCell"/>
</dbReference>
<dbReference type="GO" id="GO:0004401">
    <property type="term" value="F:histidinol-phosphatase activity"/>
    <property type="evidence" value="ECO:0007669"/>
    <property type="project" value="UniProtKB-UniRule"/>
</dbReference>
<dbReference type="GO" id="GO:0004424">
    <property type="term" value="F:imidazoleglycerol-phosphate dehydratase activity"/>
    <property type="evidence" value="ECO:0007669"/>
    <property type="project" value="UniProtKB-UniRule"/>
</dbReference>
<dbReference type="GO" id="GO:0046872">
    <property type="term" value="F:metal ion binding"/>
    <property type="evidence" value="ECO:0007669"/>
    <property type="project" value="UniProtKB-KW"/>
</dbReference>
<dbReference type="GO" id="GO:0000105">
    <property type="term" value="P:L-histidine biosynthetic process"/>
    <property type="evidence" value="ECO:0007669"/>
    <property type="project" value="UniProtKB-UniRule"/>
</dbReference>
<dbReference type="CDD" id="cd07914">
    <property type="entry name" value="IGPD"/>
    <property type="match status" value="1"/>
</dbReference>
<dbReference type="FunFam" id="3.30.230.40:FF:000001">
    <property type="entry name" value="Imidazoleglycerol-phosphate dehydratase HisB"/>
    <property type="match status" value="1"/>
</dbReference>
<dbReference type="FunFam" id="3.30.230.40:FF:000003">
    <property type="entry name" value="Imidazoleglycerol-phosphate dehydratase HisB"/>
    <property type="match status" value="1"/>
</dbReference>
<dbReference type="Gene3D" id="3.40.50.1000">
    <property type="entry name" value="HAD superfamily/HAD-like"/>
    <property type="match status" value="1"/>
</dbReference>
<dbReference type="Gene3D" id="3.30.230.40">
    <property type="entry name" value="Imidazole glycerol phosphate dehydratase, domain 1"/>
    <property type="match status" value="2"/>
</dbReference>
<dbReference type="HAMAP" id="MF_01022">
    <property type="entry name" value="Bifunc_HisB"/>
    <property type="match status" value="1"/>
</dbReference>
<dbReference type="HAMAP" id="MF_00076">
    <property type="entry name" value="HisB"/>
    <property type="match status" value="1"/>
</dbReference>
<dbReference type="InterPro" id="IPR036412">
    <property type="entry name" value="HAD-like_sf"/>
</dbReference>
<dbReference type="InterPro" id="IPR006549">
    <property type="entry name" value="HAD-SF_hydro_IIIA"/>
</dbReference>
<dbReference type="InterPro" id="IPR023214">
    <property type="entry name" value="HAD_sf"/>
</dbReference>
<dbReference type="InterPro" id="IPR020566">
    <property type="entry name" value="His_synth_bifunc_HisB"/>
</dbReference>
<dbReference type="InterPro" id="IPR005954">
    <property type="entry name" value="HisB_N"/>
</dbReference>
<dbReference type="InterPro" id="IPR006543">
    <property type="entry name" value="Histidinol-phos"/>
</dbReference>
<dbReference type="InterPro" id="IPR038494">
    <property type="entry name" value="IGPD_sf"/>
</dbReference>
<dbReference type="InterPro" id="IPR000807">
    <property type="entry name" value="ImidazoleglycerolP_deHydtase"/>
</dbReference>
<dbReference type="InterPro" id="IPR020565">
    <property type="entry name" value="ImidazoleglycerP_deHydtase_CS"/>
</dbReference>
<dbReference type="InterPro" id="IPR020568">
    <property type="entry name" value="Ribosomal_Su5_D2-typ_SF"/>
</dbReference>
<dbReference type="NCBIfam" id="TIGR01662">
    <property type="entry name" value="HAD-SF-IIIA"/>
    <property type="match status" value="1"/>
</dbReference>
<dbReference type="NCBIfam" id="TIGR01261">
    <property type="entry name" value="hisB_Nterm"/>
    <property type="match status" value="1"/>
</dbReference>
<dbReference type="NCBIfam" id="TIGR01656">
    <property type="entry name" value="Histidinol-ppas"/>
    <property type="match status" value="1"/>
</dbReference>
<dbReference type="NCBIfam" id="NF002111">
    <property type="entry name" value="PRK00951.2-1"/>
    <property type="match status" value="1"/>
</dbReference>
<dbReference type="NCBIfam" id="NF003937">
    <property type="entry name" value="PRK05446.1"/>
    <property type="match status" value="1"/>
</dbReference>
<dbReference type="PANTHER" id="PTHR23133:SF2">
    <property type="entry name" value="IMIDAZOLEGLYCEROL-PHOSPHATE DEHYDRATASE"/>
    <property type="match status" value="1"/>
</dbReference>
<dbReference type="PANTHER" id="PTHR23133">
    <property type="entry name" value="IMIDAZOLEGLYCEROL-PHOSPHATE DEHYDRATASE HIS7"/>
    <property type="match status" value="1"/>
</dbReference>
<dbReference type="Pfam" id="PF13242">
    <property type="entry name" value="Hydrolase_like"/>
    <property type="match status" value="1"/>
</dbReference>
<dbReference type="Pfam" id="PF00475">
    <property type="entry name" value="IGPD"/>
    <property type="match status" value="1"/>
</dbReference>
<dbReference type="SUPFAM" id="SSF56784">
    <property type="entry name" value="HAD-like"/>
    <property type="match status" value="1"/>
</dbReference>
<dbReference type="SUPFAM" id="SSF54211">
    <property type="entry name" value="Ribosomal protein S5 domain 2-like"/>
    <property type="match status" value="2"/>
</dbReference>
<dbReference type="PROSITE" id="PS00954">
    <property type="entry name" value="IGP_DEHYDRATASE_1"/>
    <property type="match status" value="1"/>
</dbReference>
<dbReference type="PROSITE" id="PS00955">
    <property type="entry name" value="IGP_DEHYDRATASE_2"/>
    <property type="match status" value="1"/>
</dbReference>
<keyword id="KW-0028">Amino-acid biosynthesis</keyword>
<keyword id="KW-0963">Cytoplasm</keyword>
<keyword id="KW-0368">Histidine biosynthesis</keyword>
<keyword id="KW-0378">Hydrolase</keyword>
<keyword id="KW-0456">Lyase</keyword>
<keyword id="KW-0460">Magnesium</keyword>
<keyword id="KW-0479">Metal-binding</keyword>
<keyword id="KW-0511">Multifunctional enzyme</keyword>
<gene>
    <name evidence="1" type="primary">hisB</name>
    <name type="ordered locus">XC_2378</name>
</gene>